<organism>
    <name type="scientific">Epifagus virginiana</name>
    <name type="common">Beechdrops</name>
    <name type="synonym">Orobanche virginiana</name>
    <dbReference type="NCBI Taxonomy" id="4177"/>
    <lineage>
        <taxon>Eukaryota</taxon>
        <taxon>Viridiplantae</taxon>
        <taxon>Streptophyta</taxon>
        <taxon>Embryophyta</taxon>
        <taxon>Tracheophyta</taxon>
        <taxon>Spermatophyta</taxon>
        <taxon>Magnoliopsida</taxon>
        <taxon>eudicotyledons</taxon>
        <taxon>Gunneridae</taxon>
        <taxon>Pentapetalae</taxon>
        <taxon>asterids</taxon>
        <taxon>lamiids</taxon>
        <taxon>Lamiales</taxon>
        <taxon>Orobanchaceae</taxon>
        <taxon>Orobancheae</taxon>
        <taxon>Epifagus</taxon>
    </lineage>
</organism>
<evidence type="ECO:0000250" key="1"/>
<evidence type="ECO:0000255" key="2">
    <source>
        <dbReference type="HAMAP-Rule" id="MF_00403"/>
    </source>
</evidence>
<evidence type="ECO:0000269" key="3">
    <source>
    </source>
</evidence>
<evidence type="ECO:0000305" key="4"/>
<keyword id="KW-0934">Plastid</keyword>
<keyword id="KW-0687">Ribonucleoprotein</keyword>
<keyword id="KW-0689">Ribosomal protein</keyword>
<keyword id="KW-0691">RNA editing</keyword>
<keyword id="KW-0694">RNA-binding</keyword>
<keyword id="KW-0699">rRNA-binding</keyword>
<feature type="chain" id="PRO_0000146400" description="Small ribosomal subunit protein uS12cz/uS12cy">
    <location>
        <begin position="1"/>
        <end position="124"/>
    </location>
</feature>
<proteinExistence type="evidence at transcript level"/>
<dbReference type="EMBL" id="M81884">
    <property type="protein sequence ID" value="AAA65869.1"/>
    <property type="status" value="ALT_SEQ"/>
    <property type="molecule type" value="Genomic_DNA"/>
</dbReference>
<dbReference type="EMBL" id="M81884">
    <property type="protein sequence ID" value="ACI62065.1"/>
    <property type="status" value="ALT_SEQ"/>
    <property type="molecule type" value="Genomic_DNA"/>
</dbReference>
<dbReference type="PIR" id="S78400">
    <property type="entry name" value="S78400"/>
</dbReference>
<dbReference type="SMR" id="P30060"/>
<dbReference type="GO" id="GO:0009536">
    <property type="term" value="C:plastid"/>
    <property type="evidence" value="ECO:0007669"/>
    <property type="project" value="UniProtKB-SubCell"/>
</dbReference>
<dbReference type="GO" id="GO:0015935">
    <property type="term" value="C:small ribosomal subunit"/>
    <property type="evidence" value="ECO:0007669"/>
    <property type="project" value="InterPro"/>
</dbReference>
<dbReference type="GO" id="GO:0019843">
    <property type="term" value="F:rRNA binding"/>
    <property type="evidence" value="ECO:0007669"/>
    <property type="project" value="UniProtKB-KW"/>
</dbReference>
<dbReference type="GO" id="GO:0003735">
    <property type="term" value="F:structural constituent of ribosome"/>
    <property type="evidence" value="ECO:0007669"/>
    <property type="project" value="InterPro"/>
</dbReference>
<dbReference type="GO" id="GO:0006412">
    <property type="term" value="P:translation"/>
    <property type="evidence" value="ECO:0007669"/>
    <property type="project" value="InterPro"/>
</dbReference>
<dbReference type="CDD" id="cd03368">
    <property type="entry name" value="Ribosomal_S12"/>
    <property type="match status" value="1"/>
</dbReference>
<dbReference type="FunFam" id="2.40.50.140:FF:000008">
    <property type="entry name" value="30S ribosomal protein S12, chloroplastic"/>
    <property type="match status" value="1"/>
</dbReference>
<dbReference type="Gene3D" id="2.40.50.140">
    <property type="entry name" value="Nucleic acid-binding proteins"/>
    <property type="match status" value="1"/>
</dbReference>
<dbReference type="HAMAP" id="MF_00403_B">
    <property type="entry name" value="Ribosomal_uS12_B"/>
    <property type="match status" value="1"/>
</dbReference>
<dbReference type="InterPro" id="IPR012340">
    <property type="entry name" value="NA-bd_OB-fold"/>
</dbReference>
<dbReference type="InterPro" id="IPR006032">
    <property type="entry name" value="Ribosomal_uS12"/>
</dbReference>
<dbReference type="InterPro" id="IPR005679">
    <property type="entry name" value="Ribosomal_uS12_bac"/>
</dbReference>
<dbReference type="NCBIfam" id="TIGR00981">
    <property type="entry name" value="rpsL_bact"/>
    <property type="match status" value="1"/>
</dbReference>
<dbReference type="PANTHER" id="PTHR11652">
    <property type="entry name" value="30S RIBOSOMAL PROTEIN S12 FAMILY MEMBER"/>
    <property type="match status" value="1"/>
</dbReference>
<dbReference type="Pfam" id="PF00164">
    <property type="entry name" value="Ribosom_S12_S23"/>
    <property type="match status" value="1"/>
</dbReference>
<dbReference type="PIRSF" id="PIRSF002133">
    <property type="entry name" value="Ribosomal_S12/S23"/>
    <property type="match status" value="1"/>
</dbReference>
<dbReference type="PRINTS" id="PR01034">
    <property type="entry name" value="RIBOSOMALS12"/>
</dbReference>
<dbReference type="SUPFAM" id="SSF50249">
    <property type="entry name" value="Nucleic acid-binding proteins"/>
    <property type="match status" value="1"/>
</dbReference>
<dbReference type="PROSITE" id="PS00055">
    <property type="entry name" value="RIBOSOMAL_S12"/>
    <property type="match status" value="1"/>
</dbReference>
<protein>
    <recommendedName>
        <fullName evidence="2">Small ribosomal subunit protein uS12cz/uS12cy</fullName>
    </recommendedName>
    <alternativeName>
        <fullName evidence="4">Plastid 30S ribosomal protein S12</fullName>
    </alternativeName>
</protein>
<sequence length="124" mass="13861">MPTIKQLIRKKRQPNLNVTKSPALRGCPQRRGTCTRVYTITPKKPNSALRKVARVRLTSGIEITAYIPGIGHNLQEHSSVLVRGGRVKDLPGVRYHIIRGTLDAVGVKDRQQGRSKYGVKIKNK</sequence>
<reference key="1">
    <citation type="journal article" date="1992" name="Proc. Natl. Acad. Sci. U.S.A.">
        <title>Function and evolution of a minimal plastid genome from a nonphotosynthetic parasitic plant.</title>
        <authorList>
            <person name="Wolfe K.H."/>
            <person name="Morden C.W."/>
            <person name="Palmer J.D."/>
        </authorList>
    </citation>
    <scope>NUCLEOTIDE SEQUENCE [LARGE SCALE GENOMIC DNA]</scope>
</reference>
<reference key="2">
    <citation type="journal article" date="1992" name="J. Mol. Evol.">
        <title>Rapid evolution of the plastid translational apparatus in a nonphotosynthetic plant: loss or accelerated sequence evolution of tRNA and ribosomal protein genes.</title>
        <authorList>
            <person name="Wolfe K.H."/>
            <person name="Morden C.W."/>
            <person name="Ems S.C."/>
            <person name="Palmer J.D."/>
        </authorList>
    </citation>
    <scope>NUCLEOTIDE SEQUENCE [GENOMIC DNA]</scope>
</reference>
<reference key="3">
    <citation type="journal article" date="1995" name="Plant Mol. Biol.">
        <title>Transcription, splicing and editing of plastid RNAs in the nonphotosynthetic plant Epifagus virginiana.</title>
        <authorList>
            <person name="Ems S.C."/>
            <person name="Morden C.W."/>
            <person name="Dixon C.K."/>
            <person name="Wolfe K.H."/>
            <person name="dePamphilis C.W."/>
            <person name="Palmer J.D."/>
        </authorList>
    </citation>
    <scope>NUCLEOTIDE SEQUENCE [GENOMIC DNA]</scope>
    <scope>RNA EDITING OF POSITION 74</scope>
    <source>
        <tissue>Fruit</tissue>
        <tissue>Stem</tissue>
    </source>
</reference>
<gene>
    <name type="primary">rps12-A</name>
</gene>
<gene>
    <name type="primary">rps12-B</name>
</gene>
<geneLocation type="non-photosynthetic plastid"/>
<accession>P30060</accession>
<accession>B6EU56</accession>
<comment type="function">
    <text evidence="1">With S4 and S5 plays an important role in translational accuracy. Located at the interface of the 30S and 50S subunits (By similarity).</text>
</comment>
<comment type="subunit">
    <text>Part of the 30S ribosomal subunit.</text>
</comment>
<comment type="subcellular location">
    <subcellularLocation>
        <location>Plastid</location>
    </subcellularLocation>
</comment>
<comment type="RNA editing">
    <location>
        <position position="74" evidence="3"/>
    </location>
</comment>
<comment type="similarity">
    <text evidence="4">Belongs to the universal ribosomal protein uS12 family.</text>
</comment>
<name>RR12_EPIVI</name>